<dbReference type="EC" id="6.3.4.5" evidence="1"/>
<dbReference type="EMBL" id="CP001037">
    <property type="protein sequence ID" value="ACC83868.1"/>
    <property type="molecule type" value="Genomic_DNA"/>
</dbReference>
<dbReference type="RefSeq" id="WP_012411812.1">
    <property type="nucleotide sequence ID" value="NC_010628.1"/>
</dbReference>
<dbReference type="SMR" id="B2J6U2"/>
<dbReference type="STRING" id="63737.Npun_R5563"/>
<dbReference type="EnsemblBacteria" id="ACC83868">
    <property type="protein sequence ID" value="ACC83868"/>
    <property type="gene ID" value="Npun_R5563"/>
</dbReference>
<dbReference type="KEGG" id="npu:Npun_R5563"/>
<dbReference type="eggNOG" id="COG0137">
    <property type="taxonomic scope" value="Bacteria"/>
</dbReference>
<dbReference type="HOGENOM" id="CLU_032784_4_2_3"/>
<dbReference type="OrthoDB" id="9801641at2"/>
<dbReference type="PhylomeDB" id="B2J6U2"/>
<dbReference type="UniPathway" id="UPA00068">
    <property type="reaction ID" value="UER00113"/>
</dbReference>
<dbReference type="Proteomes" id="UP000001191">
    <property type="component" value="Chromosome"/>
</dbReference>
<dbReference type="GO" id="GO:0005737">
    <property type="term" value="C:cytoplasm"/>
    <property type="evidence" value="ECO:0007669"/>
    <property type="project" value="UniProtKB-SubCell"/>
</dbReference>
<dbReference type="GO" id="GO:0004055">
    <property type="term" value="F:argininosuccinate synthase activity"/>
    <property type="evidence" value="ECO:0007669"/>
    <property type="project" value="UniProtKB-UniRule"/>
</dbReference>
<dbReference type="GO" id="GO:0005524">
    <property type="term" value="F:ATP binding"/>
    <property type="evidence" value="ECO:0007669"/>
    <property type="project" value="UniProtKB-UniRule"/>
</dbReference>
<dbReference type="GO" id="GO:0000053">
    <property type="term" value="P:argininosuccinate metabolic process"/>
    <property type="evidence" value="ECO:0007669"/>
    <property type="project" value="TreeGrafter"/>
</dbReference>
<dbReference type="GO" id="GO:0006526">
    <property type="term" value="P:L-arginine biosynthetic process"/>
    <property type="evidence" value="ECO:0007669"/>
    <property type="project" value="UniProtKB-UniRule"/>
</dbReference>
<dbReference type="GO" id="GO:0000050">
    <property type="term" value="P:urea cycle"/>
    <property type="evidence" value="ECO:0007669"/>
    <property type="project" value="TreeGrafter"/>
</dbReference>
<dbReference type="CDD" id="cd01999">
    <property type="entry name" value="ASS"/>
    <property type="match status" value="1"/>
</dbReference>
<dbReference type="FunFam" id="3.40.50.620:FF:000019">
    <property type="entry name" value="Argininosuccinate synthase"/>
    <property type="match status" value="1"/>
</dbReference>
<dbReference type="FunFam" id="3.90.1260.10:FF:000007">
    <property type="entry name" value="Argininosuccinate synthase"/>
    <property type="match status" value="1"/>
</dbReference>
<dbReference type="Gene3D" id="3.90.1260.10">
    <property type="entry name" value="Argininosuccinate synthetase, chain A, domain 2"/>
    <property type="match status" value="1"/>
</dbReference>
<dbReference type="Gene3D" id="3.40.50.620">
    <property type="entry name" value="HUPs"/>
    <property type="match status" value="1"/>
</dbReference>
<dbReference type="Gene3D" id="1.20.5.470">
    <property type="entry name" value="Single helix bin"/>
    <property type="match status" value="1"/>
</dbReference>
<dbReference type="HAMAP" id="MF_00005">
    <property type="entry name" value="Arg_succ_synth_type1"/>
    <property type="match status" value="1"/>
</dbReference>
<dbReference type="InterPro" id="IPR048268">
    <property type="entry name" value="Arginosuc_syn_C"/>
</dbReference>
<dbReference type="InterPro" id="IPR048267">
    <property type="entry name" value="Arginosuc_syn_N"/>
</dbReference>
<dbReference type="InterPro" id="IPR001518">
    <property type="entry name" value="Arginosuc_synth"/>
</dbReference>
<dbReference type="InterPro" id="IPR018223">
    <property type="entry name" value="Arginosuc_synth_CS"/>
</dbReference>
<dbReference type="InterPro" id="IPR023434">
    <property type="entry name" value="Arginosuc_synth_type_1_subfam"/>
</dbReference>
<dbReference type="InterPro" id="IPR024074">
    <property type="entry name" value="AS_cat/multimer_dom_body"/>
</dbReference>
<dbReference type="InterPro" id="IPR014729">
    <property type="entry name" value="Rossmann-like_a/b/a_fold"/>
</dbReference>
<dbReference type="NCBIfam" id="TIGR00032">
    <property type="entry name" value="argG"/>
    <property type="match status" value="1"/>
</dbReference>
<dbReference type="NCBIfam" id="NF001770">
    <property type="entry name" value="PRK00509.1"/>
    <property type="match status" value="1"/>
</dbReference>
<dbReference type="PANTHER" id="PTHR11587">
    <property type="entry name" value="ARGININOSUCCINATE SYNTHASE"/>
    <property type="match status" value="1"/>
</dbReference>
<dbReference type="PANTHER" id="PTHR11587:SF2">
    <property type="entry name" value="ARGININOSUCCINATE SYNTHASE"/>
    <property type="match status" value="1"/>
</dbReference>
<dbReference type="Pfam" id="PF20979">
    <property type="entry name" value="Arginosuc_syn_C"/>
    <property type="match status" value="1"/>
</dbReference>
<dbReference type="Pfam" id="PF00764">
    <property type="entry name" value="Arginosuc_synth"/>
    <property type="match status" value="1"/>
</dbReference>
<dbReference type="SUPFAM" id="SSF52402">
    <property type="entry name" value="Adenine nucleotide alpha hydrolases-like"/>
    <property type="match status" value="1"/>
</dbReference>
<dbReference type="SUPFAM" id="SSF69864">
    <property type="entry name" value="Argininosuccinate synthetase, C-terminal domain"/>
    <property type="match status" value="1"/>
</dbReference>
<dbReference type="PROSITE" id="PS00564">
    <property type="entry name" value="ARGININOSUCCIN_SYN_1"/>
    <property type="match status" value="1"/>
</dbReference>
<dbReference type="PROSITE" id="PS00565">
    <property type="entry name" value="ARGININOSUCCIN_SYN_2"/>
    <property type="match status" value="1"/>
</dbReference>
<feature type="chain" id="PRO_1000089046" description="Argininosuccinate synthase">
    <location>
        <begin position="1"/>
        <end position="400"/>
    </location>
</feature>
<feature type="binding site" evidence="1">
    <location>
        <begin position="10"/>
        <end position="18"/>
    </location>
    <ligand>
        <name>ATP</name>
        <dbReference type="ChEBI" id="CHEBI:30616"/>
    </ligand>
</feature>
<feature type="binding site" evidence="1">
    <location>
        <position position="38"/>
    </location>
    <ligand>
        <name>ATP</name>
        <dbReference type="ChEBI" id="CHEBI:30616"/>
    </ligand>
</feature>
<feature type="binding site" evidence="1">
    <location>
        <position position="89"/>
    </location>
    <ligand>
        <name>L-citrulline</name>
        <dbReference type="ChEBI" id="CHEBI:57743"/>
    </ligand>
</feature>
<feature type="binding site" evidence="1">
    <location>
        <position position="119"/>
    </location>
    <ligand>
        <name>ATP</name>
        <dbReference type="ChEBI" id="CHEBI:30616"/>
    </ligand>
</feature>
<feature type="binding site" evidence="1">
    <location>
        <position position="121"/>
    </location>
    <ligand>
        <name>L-aspartate</name>
        <dbReference type="ChEBI" id="CHEBI:29991"/>
    </ligand>
</feature>
<feature type="binding site" evidence="1">
    <location>
        <position position="125"/>
    </location>
    <ligand>
        <name>L-aspartate</name>
        <dbReference type="ChEBI" id="CHEBI:29991"/>
    </ligand>
</feature>
<feature type="binding site" evidence="1">
    <location>
        <position position="125"/>
    </location>
    <ligand>
        <name>L-citrulline</name>
        <dbReference type="ChEBI" id="CHEBI:57743"/>
    </ligand>
</feature>
<feature type="binding site" evidence="1">
    <location>
        <position position="126"/>
    </location>
    <ligand>
        <name>L-aspartate</name>
        <dbReference type="ChEBI" id="CHEBI:29991"/>
    </ligand>
</feature>
<feature type="binding site" evidence="1">
    <location>
        <position position="129"/>
    </location>
    <ligand>
        <name>L-citrulline</name>
        <dbReference type="ChEBI" id="CHEBI:57743"/>
    </ligand>
</feature>
<feature type="binding site" evidence="1">
    <location>
        <position position="177"/>
    </location>
    <ligand>
        <name>L-citrulline</name>
        <dbReference type="ChEBI" id="CHEBI:57743"/>
    </ligand>
</feature>
<feature type="binding site" evidence="1">
    <location>
        <position position="186"/>
    </location>
    <ligand>
        <name>L-citrulline</name>
        <dbReference type="ChEBI" id="CHEBI:57743"/>
    </ligand>
</feature>
<feature type="binding site" evidence="1">
    <location>
        <position position="262"/>
    </location>
    <ligand>
        <name>L-citrulline</name>
        <dbReference type="ChEBI" id="CHEBI:57743"/>
    </ligand>
</feature>
<feature type="binding site" evidence="1">
    <location>
        <position position="274"/>
    </location>
    <ligand>
        <name>L-citrulline</name>
        <dbReference type="ChEBI" id="CHEBI:57743"/>
    </ligand>
</feature>
<name>ASSY_NOSP7</name>
<accession>B2J6U2</accession>
<reference key="1">
    <citation type="journal article" date="2013" name="Plant Physiol.">
        <title>A Nostoc punctiforme Sugar Transporter Necessary to Establish a Cyanobacterium-Plant Symbiosis.</title>
        <authorList>
            <person name="Ekman M."/>
            <person name="Picossi S."/>
            <person name="Campbell E.L."/>
            <person name="Meeks J.C."/>
            <person name="Flores E."/>
        </authorList>
    </citation>
    <scope>NUCLEOTIDE SEQUENCE [LARGE SCALE GENOMIC DNA]</scope>
    <source>
        <strain>ATCC 29133 / PCC 73102</strain>
    </source>
</reference>
<evidence type="ECO:0000255" key="1">
    <source>
        <dbReference type="HAMAP-Rule" id="MF_00005"/>
    </source>
</evidence>
<organism>
    <name type="scientific">Nostoc punctiforme (strain ATCC 29133 / PCC 73102)</name>
    <dbReference type="NCBI Taxonomy" id="63737"/>
    <lineage>
        <taxon>Bacteria</taxon>
        <taxon>Bacillati</taxon>
        <taxon>Cyanobacteriota</taxon>
        <taxon>Cyanophyceae</taxon>
        <taxon>Nostocales</taxon>
        <taxon>Nostocaceae</taxon>
        <taxon>Nostoc</taxon>
    </lineage>
</organism>
<keyword id="KW-0028">Amino-acid biosynthesis</keyword>
<keyword id="KW-0055">Arginine biosynthesis</keyword>
<keyword id="KW-0067">ATP-binding</keyword>
<keyword id="KW-0963">Cytoplasm</keyword>
<keyword id="KW-0436">Ligase</keyword>
<keyword id="KW-0547">Nucleotide-binding</keyword>
<keyword id="KW-1185">Reference proteome</keyword>
<protein>
    <recommendedName>
        <fullName evidence="1">Argininosuccinate synthase</fullName>
        <ecNumber evidence="1">6.3.4.5</ecNumber>
    </recommendedName>
    <alternativeName>
        <fullName evidence="1">Citrulline--aspartate ligase</fullName>
    </alternativeName>
</protein>
<sequence length="400" mass="43988">MGRAKKVVLAYSGGVDTSVCIPYLKQEWGVEEVITLAADLGQGDELEPIREKALKSGASESLVADVKDSFVKDYAFGAIQANALYENRYPLGTALARPLIAKILVETAEKYGADAIAHGCTGKGNDQVRFDVSVTALNPNLKILAPAREWGMSREETIAYGEKFGIPSPVKKSSPYSIDKNLLGRSIEAGLLEDPSFEPPEEIYEMTKAIADTPNEPEYIKIGFHGGIPTTLNGIAKQPVELIEELNQLVGNHGVGRIDMIENRLVGIKSREIYESPAMLVLIQAHRDLESLTLTADVTHYKRGIEETYSQIVYNGLWYSPLKVALDAFIQKTQERVSGTVRVKLFKGNSTIVGRSSDSSLYTPDLATYGADDQFDHKAAEGFIYVWGLPTRIWSRQIKS</sequence>
<comment type="catalytic activity">
    <reaction evidence="1">
        <text>L-citrulline + L-aspartate + ATP = 2-(N(omega)-L-arginino)succinate + AMP + diphosphate + H(+)</text>
        <dbReference type="Rhea" id="RHEA:10932"/>
        <dbReference type="ChEBI" id="CHEBI:15378"/>
        <dbReference type="ChEBI" id="CHEBI:29991"/>
        <dbReference type="ChEBI" id="CHEBI:30616"/>
        <dbReference type="ChEBI" id="CHEBI:33019"/>
        <dbReference type="ChEBI" id="CHEBI:57472"/>
        <dbReference type="ChEBI" id="CHEBI:57743"/>
        <dbReference type="ChEBI" id="CHEBI:456215"/>
        <dbReference type="EC" id="6.3.4.5"/>
    </reaction>
</comment>
<comment type="pathway">
    <text evidence="1">Amino-acid biosynthesis; L-arginine biosynthesis; L-arginine from L-ornithine and carbamoyl phosphate: step 2/3.</text>
</comment>
<comment type="subunit">
    <text evidence="1">Homotetramer.</text>
</comment>
<comment type="subcellular location">
    <subcellularLocation>
        <location evidence="1">Cytoplasm</location>
    </subcellularLocation>
</comment>
<comment type="similarity">
    <text evidence="1">Belongs to the argininosuccinate synthase family. Type 1 subfamily.</text>
</comment>
<proteinExistence type="inferred from homology"/>
<gene>
    <name evidence="1" type="primary">argG</name>
    <name type="ordered locus">Npun_R5563</name>
</gene>